<sequence>MKNYYLVDEKRKTPVSTWEKISQALRRSVKLELFVGLFVMMRELLKRNNSATIKYPFEKVKLDNRYRAVHRLMRFIESENERCIGCGLCEKICISNCIRMETSLDENGRKKVENYSINLGRCIYCGFCAEVCPELAIVHGTEYENAAEQRSYFGYKQDFLTPIDKLKNQVEFEGAGSLRKDANLWVKKTPNYYDVMIERALENQNTQEQGENK</sequence>
<feature type="chain" id="PRO_0000298489" description="NADH-quinone oxidoreductase subunit I">
    <location>
        <begin position="1"/>
        <end position="213"/>
    </location>
</feature>
<feature type="domain" description="4Fe-4S ferredoxin-type 1" evidence="1">
    <location>
        <begin position="74"/>
        <end position="103"/>
    </location>
</feature>
<feature type="domain" description="4Fe-4S ferredoxin-type 2" evidence="1">
    <location>
        <begin position="113"/>
        <end position="142"/>
    </location>
</feature>
<feature type="binding site" evidence="1">
    <location>
        <position position="83"/>
    </location>
    <ligand>
        <name>[4Fe-4S] cluster</name>
        <dbReference type="ChEBI" id="CHEBI:49883"/>
        <label>1</label>
    </ligand>
</feature>
<feature type="binding site" evidence="1">
    <location>
        <position position="86"/>
    </location>
    <ligand>
        <name>[4Fe-4S] cluster</name>
        <dbReference type="ChEBI" id="CHEBI:49883"/>
        <label>1</label>
    </ligand>
</feature>
<feature type="binding site" evidence="1">
    <location>
        <position position="89"/>
    </location>
    <ligand>
        <name>[4Fe-4S] cluster</name>
        <dbReference type="ChEBI" id="CHEBI:49883"/>
        <label>1</label>
    </ligand>
</feature>
<feature type="binding site" evidence="1">
    <location>
        <position position="93"/>
    </location>
    <ligand>
        <name>[4Fe-4S] cluster</name>
        <dbReference type="ChEBI" id="CHEBI:49883"/>
        <label>2</label>
    </ligand>
</feature>
<feature type="binding site" evidence="1">
    <location>
        <position position="122"/>
    </location>
    <ligand>
        <name>[4Fe-4S] cluster</name>
        <dbReference type="ChEBI" id="CHEBI:49883"/>
        <label>2</label>
    </ligand>
</feature>
<feature type="binding site" evidence="1">
    <location>
        <position position="125"/>
    </location>
    <ligand>
        <name>[4Fe-4S] cluster</name>
        <dbReference type="ChEBI" id="CHEBI:49883"/>
        <label>2</label>
    </ligand>
</feature>
<feature type="binding site" evidence="1">
    <location>
        <position position="128"/>
    </location>
    <ligand>
        <name>[4Fe-4S] cluster</name>
        <dbReference type="ChEBI" id="CHEBI:49883"/>
        <label>2</label>
    </ligand>
</feature>
<feature type="binding site" evidence="1">
    <location>
        <position position="132"/>
    </location>
    <ligand>
        <name>[4Fe-4S] cluster</name>
        <dbReference type="ChEBI" id="CHEBI:49883"/>
        <label>1</label>
    </ligand>
</feature>
<organism>
    <name type="scientific">Campylobacter jejuni subsp. jejuni serotype O:23/36 (strain 81-176)</name>
    <dbReference type="NCBI Taxonomy" id="354242"/>
    <lineage>
        <taxon>Bacteria</taxon>
        <taxon>Pseudomonadati</taxon>
        <taxon>Campylobacterota</taxon>
        <taxon>Epsilonproteobacteria</taxon>
        <taxon>Campylobacterales</taxon>
        <taxon>Campylobacteraceae</taxon>
        <taxon>Campylobacter</taxon>
    </lineage>
</organism>
<name>NUOI_CAMJJ</name>
<accession>A1W1H0</accession>
<reference key="1">
    <citation type="submission" date="2006-12" db="EMBL/GenBank/DDBJ databases">
        <authorList>
            <person name="Fouts D.E."/>
            <person name="Nelson K.E."/>
            <person name="Sebastian Y."/>
        </authorList>
    </citation>
    <scope>NUCLEOTIDE SEQUENCE [LARGE SCALE GENOMIC DNA]</scope>
    <source>
        <strain>81-176</strain>
    </source>
</reference>
<proteinExistence type="inferred from homology"/>
<comment type="function">
    <text evidence="1">NDH-1 shuttles electrons from NADH, via FMN and iron-sulfur (Fe-S) centers, to quinones in the respiratory chain. The immediate electron acceptor for the enzyme in this species is believed to be ubiquinone. Couples the redox reaction to proton translocation (for every two electrons transferred, four hydrogen ions are translocated across the cytoplasmic membrane), and thus conserves the redox energy in a proton gradient.</text>
</comment>
<comment type="catalytic activity">
    <reaction evidence="1">
        <text>a quinone + NADH + 5 H(+)(in) = a quinol + NAD(+) + 4 H(+)(out)</text>
        <dbReference type="Rhea" id="RHEA:57888"/>
        <dbReference type="ChEBI" id="CHEBI:15378"/>
        <dbReference type="ChEBI" id="CHEBI:24646"/>
        <dbReference type="ChEBI" id="CHEBI:57540"/>
        <dbReference type="ChEBI" id="CHEBI:57945"/>
        <dbReference type="ChEBI" id="CHEBI:132124"/>
    </reaction>
</comment>
<comment type="cofactor">
    <cofactor evidence="1">
        <name>[4Fe-4S] cluster</name>
        <dbReference type="ChEBI" id="CHEBI:49883"/>
    </cofactor>
    <text evidence="1">Binds 2 [4Fe-4S] clusters per subunit.</text>
</comment>
<comment type="subunit">
    <text evidence="1">NDH-1 is composed of 14 different subunits. Subunits NuoA, H, J, K, L, M, N constitute the membrane sector of the complex.</text>
</comment>
<comment type="subcellular location">
    <subcellularLocation>
        <location evidence="1">Cell inner membrane</location>
        <topology evidence="1">Peripheral membrane protein</topology>
    </subcellularLocation>
</comment>
<comment type="similarity">
    <text evidence="1">Belongs to the complex I 23 kDa subunit family.</text>
</comment>
<keyword id="KW-0004">4Fe-4S</keyword>
<keyword id="KW-0997">Cell inner membrane</keyword>
<keyword id="KW-1003">Cell membrane</keyword>
<keyword id="KW-0408">Iron</keyword>
<keyword id="KW-0411">Iron-sulfur</keyword>
<keyword id="KW-0472">Membrane</keyword>
<keyword id="KW-0479">Metal-binding</keyword>
<keyword id="KW-0520">NAD</keyword>
<keyword id="KW-0874">Quinone</keyword>
<keyword id="KW-0677">Repeat</keyword>
<keyword id="KW-1278">Translocase</keyword>
<keyword id="KW-0830">Ubiquinone</keyword>
<evidence type="ECO:0000255" key="1">
    <source>
        <dbReference type="HAMAP-Rule" id="MF_01351"/>
    </source>
</evidence>
<protein>
    <recommendedName>
        <fullName evidence="1">NADH-quinone oxidoreductase subunit I</fullName>
        <ecNumber evidence="1">7.1.1.-</ecNumber>
    </recommendedName>
    <alternativeName>
        <fullName evidence="1">NADH dehydrogenase I subunit I</fullName>
    </alternativeName>
    <alternativeName>
        <fullName evidence="1">NDH-1 subunit I</fullName>
    </alternativeName>
</protein>
<dbReference type="EC" id="7.1.1.-" evidence="1"/>
<dbReference type="EMBL" id="CP000538">
    <property type="protein sequence ID" value="EAQ72759.1"/>
    <property type="molecule type" value="Genomic_DNA"/>
</dbReference>
<dbReference type="RefSeq" id="WP_002851456.1">
    <property type="nucleotide sequence ID" value="NC_008787.1"/>
</dbReference>
<dbReference type="SMR" id="A1W1H0"/>
<dbReference type="KEGG" id="cjj:CJJ81176_1556"/>
<dbReference type="eggNOG" id="COG1143">
    <property type="taxonomic scope" value="Bacteria"/>
</dbReference>
<dbReference type="HOGENOM" id="CLU_067218_4_1_7"/>
<dbReference type="Proteomes" id="UP000000646">
    <property type="component" value="Chromosome"/>
</dbReference>
<dbReference type="GO" id="GO:0005886">
    <property type="term" value="C:plasma membrane"/>
    <property type="evidence" value="ECO:0007669"/>
    <property type="project" value="UniProtKB-SubCell"/>
</dbReference>
<dbReference type="GO" id="GO:0051539">
    <property type="term" value="F:4 iron, 4 sulfur cluster binding"/>
    <property type="evidence" value="ECO:0007669"/>
    <property type="project" value="UniProtKB-KW"/>
</dbReference>
<dbReference type="GO" id="GO:0005506">
    <property type="term" value="F:iron ion binding"/>
    <property type="evidence" value="ECO:0007669"/>
    <property type="project" value="UniProtKB-UniRule"/>
</dbReference>
<dbReference type="GO" id="GO:0050136">
    <property type="term" value="F:NADH:ubiquinone reductase (non-electrogenic) activity"/>
    <property type="evidence" value="ECO:0007669"/>
    <property type="project" value="UniProtKB-UniRule"/>
</dbReference>
<dbReference type="GO" id="GO:0048038">
    <property type="term" value="F:quinone binding"/>
    <property type="evidence" value="ECO:0007669"/>
    <property type="project" value="UniProtKB-KW"/>
</dbReference>
<dbReference type="GO" id="GO:0009060">
    <property type="term" value="P:aerobic respiration"/>
    <property type="evidence" value="ECO:0007669"/>
    <property type="project" value="TreeGrafter"/>
</dbReference>
<dbReference type="FunFam" id="3.30.70.3270:FF:000011">
    <property type="entry name" value="NADH-quinone oxidoreductase subunit I"/>
    <property type="match status" value="1"/>
</dbReference>
<dbReference type="Gene3D" id="3.30.70.3270">
    <property type="match status" value="1"/>
</dbReference>
<dbReference type="HAMAP" id="MF_01351">
    <property type="entry name" value="NDH1_NuoI"/>
    <property type="match status" value="1"/>
</dbReference>
<dbReference type="InterPro" id="IPR017896">
    <property type="entry name" value="4Fe4S_Fe-S-bd"/>
</dbReference>
<dbReference type="InterPro" id="IPR017900">
    <property type="entry name" value="4Fe4S_Fe_S_CS"/>
</dbReference>
<dbReference type="InterPro" id="IPR010226">
    <property type="entry name" value="NADH_quinone_OxRdtase_chainI"/>
</dbReference>
<dbReference type="NCBIfam" id="TIGR01971">
    <property type="entry name" value="NuoI"/>
    <property type="match status" value="1"/>
</dbReference>
<dbReference type="NCBIfam" id="NF004542">
    <property type="entry name" value="PRK05888.2-3"/>
    <property type="match status" value="1"/>
</dbReference>
<dbReference type="PANTHER" id="PTHR10849:SF20">
    <property type="entry name" value="NADH DEHYDROGENASE [UBIQUINONE] IRON-SULFUR PROTEIN 8, MITOCHONDRIAL"/>
    <property type="match status" value="1"/>
</dbReference>
<dbReference type="PANTHER" id="PTHR10849">
    <property type="entry name" value="NADH DEHYDROGENASE UBIQUINONE IRON-SULFUR PROTEIN 8, MITOCHONDRIAL"/>
    <property type="match status" value="1"/>
</dbReference>
<dbReference type="Pfam" id="PF12838">
    <property type="entry name" value="Fer4_7"/>
    <property type="match status" value="1"/>
</dbReference>
<dbReference type="SUPFAM" id="SSF54862">
    <property type="entry name" value="4Fe-4S ferredoxins"/>
    <property type="match status" value="1"/>
</dbReference>
<dbReference type="PROSITE" id="PS00198">
    <property type="entry name" value="4FE4S_FER_1"/>
    <property type="match status" value="1"/>
</dbReference>
<dbReference type="PROSITE" id="PS51379">
    <property type="entry name" value="4FE4S_FER_2"/>
    <property type="match status" value="2"/>
</dbReference>
<gene>
    <name evidence="1" type="primary">nuoI</name>
    <name type="ordered locus">CJJ81176_1556</name>
</gene>